<name>YR337_MIMIV</name>
<comment type="similarity">
    <text evidence="1">Belongs to the cullin family.</text>
</comment>
<gene>
    <name type="ordered locus">MIMI_R337</name>
</gene>
<protein>
    <recommendedName>
        <fullName>Uncharacterized cullin-like protein R337</fullName>
    </recommendedName>
</protein>
<dbReference type="EMBL" id="AY653733">
    <property type="protein sequence ID" value="AAV50606.1"/>
    <property type="molecule type" value="Genomic_DNA"/>
</dbReference>
<dbReference type="Proteomes" id="UP000001134">
    <property type="component" value="Genome"/>
</dbReference>
<dbReference type="GO" id="GO:0031625">
    <property type="term" value="F:ubiquitin protein ligase binding"/>
    <property type="evidence" value="ECO:0007669"/>
    <property type="project" value="InterPro"/>
</dbReference>
<dbReference type="GO" id="GO:0006511">
    <property type="term" value="P:ubiquitin-dependent protein catabolic process"/>
    <property type="evidence" value="ECO:0007669"/>
    <property type="project" value="InterPro"/>
</dbReference>
<dbReference type="Gene3D" id="3.30.230.130">
    <property type="entry name" value="Cullin, Chain C, Domain 2"/>
    <property type="match status" value="1"/>
</dbReference>
<dbReference type="InterPro" id="IPR016158">
    <property type="entry name" value="Cullin_homology"/>
</dbReference>
<dbReference type="InterPro" id="IPR036317">
    <property type="entry name" value="Cullin_homology_sf"/>
</dbReference>
<dbReference type="InterPro" id="IPR001373">
    <property type="entry name" value="Cullin_N"/>
</dbReference>
<dbReference type="Pfam" id="PF00888">
    <property type="entry name" value="Cullin"/>
    <property type="match status" value="1"/>
</dbReference>
<dbReference type="SUPFAM" id="SSF75632">
    <property type="entry name" value="Cullin homology domain"/>
    <property type="match status" value="1"/>
</dbReference>
<dbReference type="PROSITE" id="PS50069">
    <property type="entry name" value="CULLIN_2"/>
    <property type="match status" value="1"/>
</dbReference>
<feature type="chain" id="PRO_0000309206" description="Uncharacterized cullin-like protein R337">
    <location>
        <begin position="1"/>
        <end position="281"/>
    </location>
</feature>
<feature type="region of interest" description="Disordered" evidence="2">
    <location>
        <begin position="192"/>
        <end position="212"/>
    </location>
</feature>
<feature type="region of interest" description="Disordered" evidence="2">
    <location>
        <begin position="227"/>
        <end position="281"/>
    </location>
</feature>
<feature type="compositionally biased region" description="Basic and acidic residues" evidence="2">
    <location>
        <begin position="200"/>
        <end position="211"/>
    </location>
</feature>
<feature type="compositionally biased region" description="Acidic residues" evidence="2">
    <location>
        <begin position="227"/>
        <end position="240"/>
    </location>
</feature>
<feature type="compositionally biased region" description="Acidic residues" evidence="2">
    <location>
        <begin position="249"/>
        <end position="260"/>
    </location>
</feature>
<accession>Q5UQT0</accession>
<organismHost>
    <name type="scientific">Acanthamoeba polyphaga</name>
    <name type="common">Amoeba</name>
    <dbReference type="NCBI Taxonomy" id="5757"/>
</organismHost>
<proteinExistence type="inferred from homology"/>
<organism>
    <name type="scientific">Acanthamoeba polyphaga mimivirus</name>
    <name type="common">APMV</name>
    <dbReference type="NCBI Taxonomy" id="212035"/>
    <lineage>
        <taxon>Viruses</taxon>
        <taxon>Varidnaviria</taxon>
        <taxon>Bamfordvirae</taxon>
        <taxon>Nucleocytoviricota</taxon>
        <taxon>Megaviricetes</taxon>
        <taxon>Imitervirales</taxon>
        <taxon>Mimiviridae</taxon>
        <taxon>Megamimivirinae</taxon>
        <taxon>Mimivirus</taxon>
        <taxon>Mimivirus bradfordmassiliense</taxon>
    </lineage>
</organism>
<sequence length="281" mass="31628">MISNRNNNTSIHNATVENVEGKYKSIGDISTEMLNPVIIDKTVWTIFNNLNIDVQYPLELECYLNIVEKSYNIIYENKFSINWLPTMGTACFRAILGDKNVTITCNILQAIIISLFNDTNNLSASSVYNKTGIQYDLSEKILESLFEANIVTRKYSSNDTVYIVNTHNYTGDTNINIINEFIELFETPVNSSNSSVNLSMDKKSDDSKIQETDISTAETDVKFLGDEDYVDGNEDCISDNEDAKKYDSDTDSDLGDLEDPNEPKLIVDSCSDCSESDSEEY</sequence>
<reference key="1">
    <citation type="journal article" date="2004" name="Science">
        <title>The 1.2-megabase genome sequence of Mimivirus.</title>
        <authorList>
            <person name="Raoult D."/>
            <person name="Audic S."/>
            <person name="Robert C."/>
            <person name="Abergel C."/>
            <person name="Renesto P."/>
            <person name="Ogata H."/>
            <person name="La Scola B."/>
            <person name="Susan M."/>
            <person name="Claverie J.-M."/>
        </authorList>
    </citation>
    <scope>NUCLEOTIDE SEQUENCE [LARGE SCALE GENOMIC DNA]</scope>
    <source>
        <strain>Rowbotham-Bradford</strain>
    </source>
</reference>
<keyword id="KW-1185">Reference proteome</keyword>
<evidence type="ECO:0000255" key="1">
    <source>
        <dbReference type="PROSITE-ProRule" id="PRU00330"/>
    </source>
</evidence>
<evidence type="ECO:0000256" key="2">
    <source>
        <dbReference type="SAM" id="MobiDB-lite"/>
    </source>
</evidence>